<gene>
    <name type="primary">SUB2-1</name>
    <name type="ORF">Kpol_1041p33</name>
</gene>
<protein>
    <recommendedName>
        <fullName>ATP-dependent RNA helicase SUB2-1</fullName>
        <ecNumber>3.6.4.13</ecNumber>
    </recommendedName>
</protein>
<comment type="function">
    <text evidence="1">ATP-binding RNA helicase involved in transcription elongation and required for the export of mRNA out of the nucleus. SUB2 also plays a role in pre-mRNA splicing and spliceosome assembly. May be involved in rDNA and telomeric silencing, and maintenance of genome integrity (By similarity).</text>
</comment>
<comment type="catalytic activity">
    <reaction>
        <text>ATP + H2O = ADP + phosphate + H(+)</text>
        <dbReference type="Rhea" id="RHEA:13065"/>
        <dbReference type="ChEBI" id="CHEBI:15377"/>
        <dbReference type="ChEBI" id="CHEBI:15378"/>
        <dbReference type="ChEBI" id="CHEBI:30616"/>
        <dbReference type="ChEBI" id="CHEBI:43474"/>
        <dbReference type="ChEBI" id="CHEBI:456216"/>
        <dbReference type="EC" id="3.6.4.13"/>
    </reaction>
</comment>
<comment type="subcellular location">
    <subcellularLocation>
        <location evidence="1">Nucleus</location>
    </subcellularLocation>
</comment>
<comment type="domain">
    <text>The Q motif is unique to and characteristic of the DEAD box family of RNA helicases and controls ATP binding and hydrolysis.</text>
</comment>
<comment type="similarity">
    <text evidence="5">Belongs to the DEAD box helicase family. DECD subfamily.</text>
</comment>
<accession>A7TLA0</accession>
<proteinExistence type="inferred from homology"/>
<organism>
    <name type="scientific">Vanderwaltozyma polyspora (strain ATCC 22028 / DSM 70294 / BCRC 21397 / CBS 2163 / NBRC 10782 / NRRL Y-8283 / UCD 57-17)</name>
    <name type="common">Kluyveromyces polysporus</name>
    <dbReference type="NCBI Taxonomy" id="436907"/>
    <lineage>
        <taxon>Eukaryota</taxon>
        <taxon>Fungi</taxon>
        <taxon>Dikarya</taxon>
        <taxon>Ascomycota</taxon>
        <taxon>Saccharomycotina</taxon>
        <taxon>Saccharomycetes</taxon>
        <taxon>Saccharomycetales</taxon>
        <taxon>Saccharomycetaceae</taxon>
        <taxon>Vanderwaltozyma</taxon>
    </lineage>
</organism>
<sequence>MSHEGEEDLLEYSDNEQDIQVDASKAAEPSELDATTAEDASNGDAEKKGSYVGIHSTGFKDFLLKPELARAIIDCGFEHPSEVQQHTIPQSIHGTDVLCQAKSGLGKTAVFVLSTLQQLDPVPGEVSVVVICNARELAYQIRNEYLRFSKYMPDVKTAVFYGGTPINKDAELLKNKETAPHIVVATPGRLKALVRDKLIDLSHVKNFVIDECDKVLEELDMRRDVQDIFRATPRDKQVMMFSATLSEEIRPICRRFLQNPLEIFVDDEAKLTLHGLQQYYTKLQENEKNRKLAQLLDDLEFNQVIIFVKSTKRANELTKLLNESNFPAITVHGHMKQAERIARYKAFKEFEKRICVSTDVFGRGIDIERINLAINYDLTTEADQYLHRVGRAGRFGTKGLAISFVSSPEDEEVLGKIQERFDVKIAEFPEEGIDPSTYLNN</sequence>
<dbReference type="EC" id="3.6.4.13"/>
<dbReference type="EMBL" id="DS480413">
    <property type="protein sequence ID" value="EDO16975.1"/>
    <property type="molecule type" value="Genomic_DNA"/>
</dbReference>
<dbReference type="RefSeq" id="XP_001644833.1">
    <property type="nucleotide sequence ID" value="XM_001644783.1"/>
</dbReference>
<dbReference type="SMR" id="A7TLA0"/>
<dbReference type="FunCoup" id="A7TLA0">
    <property type="interactions" value="1359"/>
</dbReference>
<dbReference type="STRING" id="436907.A7TLA0"/>
<dbReference type="GeneID" id="5545160"/>
<dbReference type="KEGG" id="vpo:Kpol_1041p33"/>
<dbReference type="eggNOG" id="KOG0329">
    <property type="taxonomic scope" value="Eukaryota"/>
</dbReference>
<dbReference type="HOGENOM" id="CLU_003041_1_0_1"/>
<dbReference type="InParanoid" id="A7TLA0"/>
<dbReference type="OMA" id="YAHVEPK"/>
<dbReference type="OrthoDB" id="10265785at2759"/>
<dbReference type="PhylomeDB" id="A7TLA0"/>
<dbReference type="Proteomes" id="UP000000267">
    <property type="component" value="Unassembled WGS sequence"/>
</dbReference>
<dbReference type="GO" id="GO:0005681">
    <property type="term" value="C:spliceosomal complex"/>
    <property type="evidence" value="ECO:0007669"/>
    <property type="project" value="UniProtKB-KW"/>
</dbReference>
<dbReference type="GO" id="GO:0005524">
    <property type="term" value="F:ATP binding"/>
    <property type="evidence" value="ECO:0007669"/>
    <property type="project" value="UniProtKB-KW"/>
</dbReference>
<dbReference type="GO" id="GO:0016887">
    <property type="term" value="F:ATP hydrolysis activity"/>
    <property type="evidence" value="ECO:0007669"/>
    <property type="project" value="RHEA"/>
</dbReference>
<dbReference type="GO" id="GO:0003723">
    <property type="term" value="F:RNA binding"/>
    <property type="evidence" value="ECO:0007669"/>
    <property type="project" value="UniProtKB-KW"/>
</dbReference>
<dbReference type="GO" id="GO:0003724">
    <property type="term" value="F:RNA helicase activity"/>
    <property type="evidence" value="ECO:0007669"/>
    <property type="project" value="UniProtKB-EC"/>
</dbReference>
<dbReference type="GO" id="GO:0006397">
    <property type="term" value="P:mRNA processing"/>
    <property type="evidence" value="ECO:0007669"/>
    <property type="project" value="UniProtKB-KW"/>
</dbReference>
<dbReference type="GO" id="GO:0051028">
    <property type="term" value="P:mRNA transport"/>
    <property type="evidence" value="ECO:0007669"/>
    <property type="project" value="UniProtKB-KW"/>
</dbReference>
<dbReference type="GO" id="GO:0008380">
    <property type="term" value="P:RNA splicing"/>
    <property type="evidence" value="ECO:0007669"/>
    <property type="project" value="UniProtKB-KW"/>
</dbReference>
<dbReference type="CDD" id="cd17950">
    <property type="entry name" value="DEADc_DDX39"/>
    <property type="match status" value="1"/>
</dbReference>
<dbReference type="CDD" id="cd18787">
    <property type="entry name" value="SF2_C_DEAD"/>
    <property type="match status" value="1"/>
</dbReference>
<dbReference type="FunFam" id="3.40.50.300:FF:000809">
    <property type="entry name" value="ATP-dependent RNA helicase SUB2"/>
    <property type="match status" value="1"/>
</dbReference>
<dbReference type="FunFam" id="3.40.50.300:FF:000111">
    <property type="entry name" value="DEAD-box ATP-dependent RNA helicase"/>
    <property type="match status" value="1"/>
</dbReference>
<dbReference type="Gene3D" id="3.40.50.300">
    <property type="entry name" value="P-loop containing nucleotide triphosphate hydrolases"/>
    <property type="match status" value="2"/>
</dbReference>
<dbReference type="InterPro" id="IPR011545">
    <property type="entry name" value="DEAD/DEAH_box_helicase_dom"/>
</dbReference>
<dbReference type="InterPro" id="IPR014001">
    <property type="entry name" value="Helicase_ATP-bd"/>
</dbReference>
<dbReference type="InterPro" id="IPR001650">
    <property type="entry name" value="Helicase_C-like"/>
</dbReference>
<dbReference type="InterPro" id="IPR027417">
    <property type="entry name" value="P-loop_NTPase"/>
</dbReference>
<dbReference type="InterPro" id="IPR014014">
    <property type="entry name" value="RNA_helicase_DEAD_Q_motif"/>
</dbReference>
<dbReference type="PANTHER" id="PTHR47958">
    <property type="entry name" value="ATP-DEPENDENT RNA HELICASE DBP3"/>
    <property type="match status" value="1"/>
</dbReference>
<dbReference type="Pfam" id="PF00270">
    <property type="entry name" value="DEAD"/>
    <property type="match status" value="1"/>
</dbReference>
<dbReference type="Pfam" id="PF00271">
    <property type="entry name" value="Helicase_C"/>
    <property type="match status" value="1"/>
</dbReference>
<dbReference type="SMART" id="SM00487">
    <property type="entry name" value="DEXDc"/>
    <property type="match status" value="1"/>
</dbReference>
<dbReference type="SMART" id="SM00490">
    <property type="entry name" value="HELICc"/>
    <property type="match status" value="1"/>
</dbReference>
<dbReference type="SUPFAM" id="SSF52540">
    <property type="entry name" value="P-loop containing nucleoside triphosphate hydrolases"/>
    <property type="match status" value="1"/>
</dbReference>
<dbReference type="PROSITE" id="PS51192">
    <property type="entry name" value="HELICASE_ATP_BIND_1"/>
    <property type="match status" value="1"/>
</dbReference>
<dbReference type="PROSITE" id="PS51194">
    <property type="entry name" value="HELICASE_CTER"/>
    <property type="match status" value="1"/>
</dbReference>
<dbReference type="PROSITE" id="PS51195">
    <property type="entry name" value="Q_MOTIF"/>
    <property type="match status" value="1"/>
</dbReference>
<evidence type="ECO:0000250" key="1"/>
<evidence type="ECO:0000255" key="2">
    <source>
        <dbReference type="PROSITE-ProRule" id="PRU00541"/>
    </source>
</evidence>
<evidence type="ECO:0000255" key="3">
    <source>
        <dbReference type="PROSITE-ProRule" id="PRU00542"/>
    </source>
</evidence>
<evidence type="ECO:0000256" key="4">
    <source>
        <dbReference type="SAM" id="MobiDB-lite"/>
    </source>
</evidence>
<evidence type="ECO:0000305" key="5"/>
<feature type="chain" id="PRO_0000310223" description="ATP-dependent RNA helicase SUB2-1">
    <location>
        <begin position="1"/>
        <end position="441"/>
    </location>
</feature>
<feature type="domain" description="Helicase ATP-binding" evidence="2">
    <location>
        <begin position="88"/>
        <end position="263"/>
    </location>
</feature>
<feature type="domain" description="Helicase C-terminal" evidence="3">
    <location>
        <begin position="291"/>
        <end position="436"/>
    </location>
</feature>
<feature type="region of interest" description="Disordered" evidence="4">
    <location>
        <begin position="1"/>
        <end position="46"/>
    </location>
</feature>
<feature type="short sequence motif" description="Q motif">
    <location>
        <begin position="57"/>
        <end position="85"/>
    </location>
</feature>
<feature type="short sequence motif" description="DECD box">
    <location>
        <begin position="210"/>
        <end position="213"/>
    </location>
</feature>
<feature type="compositionally biased region" description="Acidic residues" evidence="4">
    <location>
        <begin position="1"/>
        <end position="19"/>
    </location>
</feature>
<feature type="binding site" evidence="2">
    <location>
        <begin position="101"/>
        <end position="108"/>
    </location>
    <ligand>
        <name>ATP</name>
        <dbReference type="ChEBI" id="CHEBI:30616"/>
    </ligand>
</feature>
<name>SUB21_VANPO</name>
<keyword id="KW-0067">ATP-binding</keyword>
<keyword id="KW-0347">Helicase</keyword>
<keyword id="KW-0378">Hydrolase</keyword>
<keyword id="KW-0507">mRNA processing</keyword>
<keyword id="KW-0508">mRNA splicing</keyword>
<keyword id="KW-0509">mRNA transport</keyword>
<keyword id="KW-0547">Nucleotide-binding</keyword>
<keyword id="KW-0539">Nucleus</keyword>
<keyword id="KW-1185">Reference proteome</keyword>
<keyword id="KW-0694">RNA-binding</keyword>
<keyword id="KW-0747">Spliceosome</keyword>
<keyword id="KW-0813">Transport</keyword>
<reference key="1">
    <citation type="journal article" date="2007" name="Proc. Natl. Acad. Sci. U.S.A.">
        <title>Independent sorting-out of thousands of duplicated gene pairs in two yeast species descended from a whole-genome duplication.</title>
        <authorList>
            <person name="Scannell D.R."/>
            <person name="Frank A.C."/>
            <person name="Conant G.C."/>
            <person name="Byrne K.P."/>
            <person name="Woolfit M."/>
            <person name="Wolfe K.H."/>
        </authorList>
    </citation>
    <scope>NUCLEOTIDE SEQUENCE [LARGE SCALE GENOMIC DNA]</scope>
    <source>
        <strain>ATCC 22028 / DSM 70294 / BCRC 21397 / CBS 2163 / NBRC 10782 / NRRL Y-8283 / UCD 57-17</strain>
    </source>
</reference>